<protein>
    <recommendedName>
        <fullName>Pulmonary surfactant-associated protein B</fullName>
        <shortName>SP-B</shortName>
    </recommendedName>
    <alternativeName>
        <fullName>6 kDa protein</fullName>
    </alternativeName>
    <alternativeName>
        <fullName>Pulmonary surfactant-associated proteolipid SPL(Phe)</fullName>
    </alternativeName>
</protein>
<name>PSPB_BOVIN</name>
<organism>
    <name type="scientific">Bos taurus</name>
    <name type="common">Bovine</name>
    <dbReference type="NCBI Taxonomy" id="9913"/>
    <lineage>
        <taxon>Eukaryota</taxon>
        <taxon>Metazoa</taxon>
        <taxon>Chordata</taxon>
        <taxon>Craniata</taxon>
        <taxon>Vertebrata</taxon>
        <taxon>Euteleostomi</taxon>
        <taxon>Mammalia</taxon>
        <taxon>Eutheria</taxon>
        <taxon>Laurasiatheria</taxon>
        <taxon>Artiodactyla</taxon>
        <taxon>Ruminantia</taxon>
        <taxon>Pecora</taxon>
        <taxon>Bovidae</taxon>
        <taxon>Bovinae</taxon>
        <taxon>Bos</taxon>
    </lineage>
</organism>
<gene>
    <name type="primary">SFTPB</name>
    <name type="synonym">SFTP3</name>
</gene>
<accession>P15781</accession>
<accession>Q148E8</accession>
<feature type="signal peptide" evidence="1">
    <location>
        <begin position="1"/>
        <end position="22"/>
    </location>
</feature>
<feature type="propeptide" id="PRO_0000285124">
    <location>
        <begin position="23"/>
        <end position="187"/>
    </location>
</feature>
<feature type="chain" id="PRO_0000175240" description="Pulmonary surfactant-associated protein B">
    <location>
        <begin position="188"/>
        <end position="266"/>
    </location>
</feature>
<feature type="propeptide" id="PRO_0000285125">
    <location>
        <begin position="267"/>
        <end position="373"/>
    </location>
</feature>
<feature type="domain" description="Saposin A-type" evidence="2">
    <location>
        <begin position="24"/>
        <end position="64"/>
    </location>
</feature>
<feature type="domain" description="Saposin B-type 1" evidence="3">
    <location>
        <begin position="64"/>
        <end position="146"/>
    </location>
</feature>
<feature type="domain" description="Saposin B-type 2" evidence="3">
    <location>
        <begin position="191"/>
        <end position="268"/>
    </location>
</feature>
<feature type="domain" description="Saposin B-type 3" evidence="3">
    <location>
        <begin position="287"/>
        <end position="362"/>
    </location>
</feature>
<feature type="glycosylation site" description="N-linked (GlcNAc...) asparagine" evidence="3">
    <location>
        <position position="73"/>
    </location>
</feature>
<feature type="glycosylation site" description="N-linked (GlcNAc...) asparagine" evidence="3">
    <location>
        <position position="303"/>
    </location>
</feature>
<feature type="disulfide bond" evidence="3">
    <location>
        <begin position="68"/>
        <end position="142"/>
    </location>
</feature>
<feature type="disulfide bond" evidence="3">
    <location>
        <begin position="71"/>
        <end position="136"/>
    </location>
</feature>
<feature type="disulfide bond" evidence="3">
    <location>
        <begin position="99"/>
        <end position="111"/>
    </location>
</feature>
<feature type="disulfide bond" evidence="3">
    <location>
        <begin position="195"/>
        <end position="264"/>
    </location>
</feature>
<feature type="disulfide bond" evidence="3">
    <location>
        <begin position="198"/>
        <end position="258"/>
    </location>
</feature>
<feature type="disulfide bond" evidence="3">
    <location>
        <begin position="222"/>
        <end position="233"/>
    </location>
</feature>
<feature type="disulfide bond" description="Interchain" evidence="3">
    <location>
        <position position="235"/>
    </location>
</feature>
<feature type="disulfide bond" evidence="3">
    <location>
        <begin position="291"/>
        <end position="358"/>
    </location>
</feature>
<feature type="disulfide bond" evidence="3">
    <location>
        <begin position="294"/>
        <end position="352"/>
    </location>
</feature>
<feature type="disulfide bond" evidence="3">
    <location>
        <begin position="317"/>
        <end position="327"/>
    </location>
</feature>
<feature type="sequence conflict" description="In Ref. 2; AA sequence." evidence="4" ref="2">
    <original>C</original>
    <variation>L</variation>
    <location>
        <position position="198"/>
    </location>
</feature>
<feature type="sequence conflict" description="In Ref. 2; AA sequence." evidence="4" ref="2">
    <original>R</original>
    <variation>K</variation>
    <location>
        <position position="204"/>
    </location>
</feature>
<feature type="sequence conflict" description="In Ref. 2; AA sequence." evidence="4" ref="2">
    <original>CQCLVER</original>
    <variation>IQQLVIE</variation>
    <location>
        <begin position="233"/>
        <end position="239"/>
    </location>
</feature>
<feature type="sequence conflict" description="In Ref. 2; AA sequence." evidence="4" ref="2">
    <original>L</original>
    <variation>LT</variation>
    <location>
        <position position="245"/>
    </location>
</feature>
<feature type="sequence conflict" description="In Ref. 2; AA sequence." evidence="4" ref="2">
    <location>
        <position position="252"/>
    </location>
</feature>
<feature type="sequence conflict" description="In Ref. 2; AA sequence." evidence="4" ref="2">
    <original>Q</original>
    <variation>N</variation>
    <location>
        <position position="255"/>
    </location>
</feature>
<feature type="sequence conflict" description="In Ref. 2; AA sequence." evidence="4" ref="2">
    <original>V</original>
    <variation>R</variation>
    <location>
        <position position="261"/>
    </location>
</feature>
<feature type="sequence conflict" description="In Ref. 2; AA sequence." evidence="4" ref="2">
    <original>S</original>
    <variation>G</variation>
    <location>
        <position position="266"/>
    </location>
</feature>
<dbReference type="EMBL" id="BC118395">
    <property type="protein sequence ID" value="AAI18396.1"/>
    <property type="molecule type" value="mRNA"/>
</dbReference>
<dbReference type="PIR" id="A29667">
    <property type="entry name" value="A29667"/>
</dbReference>
<dbReference type="RefSeq" id="NP_001068779.1">
    <property type="nucleotide sequence ID" value="NM_001075311.2"/>
</dbReference>
<dbReference type="RefSeq" id="XP_005212817.1">
    <property type="nucleotide sequence ID" value="XM_005212760.4"/>
</dbReference>
<dbReference type="SMR" id="P15781"/>
<dbReference type="FunCoup" id="P15781">
    <property type="interactions" value="38"/>
</dbReference>
<dbReference type="STRING" id="9913.ENSBTAP00000042549"/>
<dbReference type="GlyCosmos" id="P15781">
    <property type="glycosylation" value="2 sites, No reported glycans"/>
</dbReference>
<dbReference type="GlyGen" id="P15781">
    <property type="glycosylation" value="2 sites"/>
</dbReference>
<dbReference type="PaxDb" id="9913-ENSBTAP00000042549"/>
<dbReference type="Ensembl" id="ENSBTAT00000045134.5">
    <property type="protein sequence ID" value="ENSBTAP00000042549.3"/>
    <property type="gene ID" value="ENSBTAG00000021230.7"/>
</dbReference>
<dbReference type="GeneID" id="507398"/>
<dbReference type="KEGG" id="bta:507398"/>
<dbReference type="CTD" id="6439"/>
<dbReference type="VEuPathDB" id="HostDB:ENSBTAG00000021230"/>
<dbReference type="VGNC" id="VGNC:34528">
    <property type="gene designation" value="SFTPB"/>
</dbReference>
<dbReference type="eggNOG" id="KOG1340">
    <property type="taxonomic scope" value="Eukaryota"/>
</dbReference>
<dbReference type="GeneTree" id="ENSGT00940000161711"/>
<dbReference type="HOGENOM" id="CLU_063244_0_0_1"/>
<dbReference type="InParanoid" id="P15781"/>
<dbReference type="OMA" id="PKFWCQS"/>
<dbReference type="OrthoDB" id="8889685at2759"/>
<dbReference type="TreeFam" id="TF316942"/>
<dbReference type="Reactome" id="R-BTA-5683826">
    <property type="pathway name" value="Surfactant metabolism"/>
</dbReference>
<dbReference type="Proteomes" id="UP000009136">
    <property type="component" value="Chromosome 11"/>
</dbReference>
<dbReference type="Bgee" id="ENSBTAG00000021230">
    <property type="expression patterns" value="Expressed in lung and 10 other cell types or tissues"/>
</dbReference>
<dbReference type="GO" id="GO:0097208">
    <property type="term" value="C:alveolar lamellar body"/>
    <property type="evidence" value="ECO:0000318"/>
    <property type="project" value="GO_Central"/>
</dbReference>
<dbReference type="GO" id="GO:0005615">
    <property type="term" value="C:extracellular space"/>
    <property type="evidence" value="ECO:0000318"/>
    <property type="project" value="GO_Central"/>
</dbReference>
<dbReference type="GO" id="GO:0005764">
    <property type="term" value="C:lysosome"/>
    <property type="evidence" value="ECO:0007669"/>
    <property type="project" value="InterPro"/>
</dbReference>
<dbReference type="GO" id="GO:0016020">
    <property type="term" value="C:membrane"/>
    <property type="evidence" value="ECO:0007669"/>
    <property type="project" value="GOC"/>
</dbReference>
<dbReference type="GO" id="GO:0005771">
    <property type="term" value="C:multivesicular body"/>
    <property type="evidence" value="ECO:0000318"/>
    <property type="project" value="GO_Central"/>
</dbReference>
<dbReference type="GO" id="GO:0007585">
    <property type="term" value="P:respiratory gaseous exchange by respiratory system"/>
    <property type="evidence" value="ECO:0007669"/>
    <property type="project" value="UniProtKB-KW"/>
</dbReference>
<dbReference type="GO" id="GO:0006665">
    <property type="term" value="P:sphingolipid metabolic process"/>
    <property type="evidence" value="ECO:0007669"/>
    <property type="project" value="InterPro"/>
</dbReference>
<dbReference type="FunFam" id="1.10.225.10:FF:000008">
    <property type="entry name" value="Pulmonary surfactant-associated protein B"/>
    <property type="match status" value="1"/>
</dbReference>
<dbReference type="FunFam" id="1.10.225.10:FF:000011">
    <property type="entry name" value="Pulmonary surfactant-associated protein B"/>
    <property type="match status" value="1"/>
</dbReference>
<dbReference type="Gene3D" id="1.10.225.10">
    <property type="entry name" value="Saposin-like"/>
    <property type="match status" value="2"/>
</dbReference>
<dbReference type="InterPro" id="IPR003119">
    <property type="entry name" value="SAP_A"/>
</dbReference>
<dbReference type="InterPro" id="IPR008138">
    <property type="entry name" value="SapB_2"/>
</dbReference>
<dbReference type="InterPro" id="IPR008373">
    <property type="entry name" value="Saposin"/>
</dbReference>
<dbReference type="InterPro" id="IPR011001">
    <property type="entry name" value="Saposin-like"/>
</dbReference>
<dbReference type="InterPro" id="IPR008139">
    <property type="entry name" value="SaposinB_dom"/>
</dbReference>
<dbReference type="InterPro" id="IPR051428">
    <property type="entry name" value="Sphingo_Act-Surfact_Prot"/>
</dbReference>
<dbReference type="PANTHER" id="PTHR11480:SF33">
    <property type="entry name" value="PULMONARY SURFACTANT-ASSOCIATED PROTEIN B"/>
    <property type="match status" value="1"/>
</dbReference>
<dbReference type="PANTHER" id="PTHR11480">
    <property type="entry name" value="SAPOSIN-RELATED"/>
    <property type="match status" value="1"/>
</dbReference>
<dbReference type="Pfam" id="PF02199">
    <property type="entry name" value="SapA"/>
    <property type="match status" value="1"/>
</dbReference>
<dbReference type="Pfam" id="PF03489">
    <property type="entry name" value="SapB_2"/>
    <property type="match status" value="2"/>
</dbReference>
<dbReference type="PRINTS" id="PR01797">
    <property type="entry name" value="SAPOSIN"/>
</dbReference>
<dbReference type="SMART" id="SM00162">
    <property type="entry name" value="SAPA"/>
    <property type="match status" value="1"/>
</dbReference>
<dbReference type="SMART" id="SM00741">
    <property type="entry name" value="SapB"/>
    <property type="match status" value="3"/>
</dbReference>
<dbReference type="SUPFAM" id="SSF47862">
    <property type="entry name" value="Saposin"/>
    <property type="match status" value="2"/>
</dbReference>
<dbReference type="PROSITE" id="PS51110">
    <property type="entry name" value="SAP_A"/>
    <property type="match status" value="1"/>
</dbReference>
<dbReference type="PROSITE" id="PS50015">
    <property type="entry name" value="SAP_B"/>
    <property type="match status" value="3"/>
</dbReference>
<comment type="function">
    <text>Pulmonary surfactant-associated proteins promote alveolar stability by lowering the surface tension at the air-liquid interface in the peripheral air spaces. SP-B increases the collapse pressure of palmitic acid to nearly 70 millinewtons per meter.</text>
</comment>
<comment type="subunit">
    <text>Homodimer; disulfide-linked.</text>
</comment>
<comment type="subcellular location">
    <subcellularLocation>
        <location>Secreted</location>
        <location>Extracellular space</location>
        <location>Surface film</location>
    </subcellularLocation>
</comment>
<comment type="miscellaneous">
    <text>Pulmonary surfactant consists of 90% lipid and 10% protein. There are 4 surfactant-associated proteins: 2 collagenous, carbohydrate-binding glycoproteins (SP-A and SP-D) and 2 small hydrophobic proteins (SP-B and SP-C).</text>
</comment>
<reference key="1">
    <citation type="submission" date="2006-06" db="EMBL/GenBank/DDBJ databases">
        <authorList>
            <consortium name="NIH - Mammalian Gene Collection (MGC) project"/>
        </authorList>
    </citation>
    <scope>NUCLEOTIDE SEQUENCE [LARGE SCALE MRNA]</scope>
    <source>
        <strain>Hereford</strain>
        <tissue>Fetal lung</tissue>
    </source>
</reference>
<reference key="2">
    <citation type="journal article" date="1987" name="Biochem. Biophys. Res. Commun.">
        <title>Protein sequence analysis studies on the low molecular weight hydrophobic proteins associated with bovine pulmonary surfactant.</title>
        <authorList>
            <person name="Olafson R.W."/>
            <person name="Rink U."/>
            <person name="Kielland S."/>
            <person name="Yu S.-H."/>
            <person name="Chung J."/>
            <person name="Harding P.G.R."/>
            <person name="Possmayer F."/>
        </authorList>
    </citation>
    <scope>PROTEIN SEQUENCE OF 188-266</scope>
</reference>
<reference key="3">
    <citation type="journal article" date="2008" name="Rapid Commun. Mass Spectrom.">
        <title>Characterization of bovine surfactant proteins B and C by electrospray ionization mass spectrometry.</title>
        <authorList>
            <person name="Liu S."/>
            <person name="Zhao L."/>
            <person name="Manzanares D."/>
            <person name="Doherty-Kirby A."/>
            <person name="Zhang C."/>
            <person name="Possmayer F."/>
            <person name="Lajoie G.A."/>
        </authorList>
    </citation>
    <scope>PROTEIN SEQUENCE OF 188-266</scope>
    <scope>IDENTIFICATION BY MASS SPECTROMETRY</scope>
</reference>
<reference key="4">
    <citation type="journal article" date="1987" name="Biochim. Biophys. Acta">
        <title>Characterization of the small hydrophobic proteins associated with pulmonary surfactant.</title>
        <authorList>
            <person name="Yu S.-H."/>
            <person name="Chung W."/>
            <person name="Olafson R.W."/>
            <person name="Harding P.G.R."/>
            <person name="Possmayer F."/>
        </authorList>
    </citation>
    <scope>PROTEIN SEQUENCE OF 188-197</scope>
</reference>
<proteinExistence type="evidence at protein level"/>
<evidence type="ECO:0000255" key="1"/>
<evidence type="ECO:0000255" key="2">
    <source>
        <dbReference type="PROSITE-ProRule" id="PRU00414"/>
    </source>
</evidence>
<evidence type="ECO:0000255" key="3">
    <source>
        <dbReference type="PROSITE-ProRule" id="PRU00415"/>
    </source>
</evidence>
<evidence type="ECO:0000305" key="4"/>
<keyword id="KW-0903">Direct protein sequencing</keyword>
<keyword id="KW-1015">Disulfide bond</keyword>
<keyword id="KW-0305">Gaseous exchange</keyword>
<keyword id="KW-0325">Glycoprotein</keyword>
<keyword id="KW-1185">Reference proteome</keyword>
<keyword id="KW-0677">Repeat</keyword>
<keyword id="KW-0964">Secreted</keyword>
<keyword id="KW-0732">Signal</keyword>
<keyword id="KW-0767">Surface film</keyword>
<sequence length="373" mass="41060">MAKSHLLPWLLLLPILCGPGTAAAITYSLACAQGPEFWCQSLEQALQCRALGHCLQEVWGHVEADDLCQECENISRLLTKMAKEAIFQDSVRKFLEQECDVLPLKLLAPLCRHLLDTYFPLIIEHFQSHMNPKFICQHVGLCKPRHPEPGKGPEPWGPLLDKLALPLLPGVPQAKPGPQTQDLSEQLFPIPIPYCWLCRTLIKRIQAVIPKGVLAMTVAQVCHVVPLLVGGICQCLVERYSVILLDTLLGRMLPQLVCGLVLRCSSEDSAGPALPALGSVPGEWLPQDSDCQLCMFVTTQAGNSSEQATPQAMRQACLGTWLDRQKCERFVEENAPRLQTLVSSGWDAHMACQALGTCAAPFSPLQCVHSPHF</sequence>